<sequence>MKYMVLFSGLLFSNVLVASELPDFLDMNDIENAKFQCLGESPQYSAQDQKYIDILWEETLTYLRAYAEALTNDQNSGCLNSDIAMVDSTEGGQHMCVMDRRDMKLMVKNVYQVINNADAAKKCFGAREDVSWIYSPGGELESRSEVAQWINRTTFKQFFDKQVTDKEVQQYGKSFTENFYKMVTGSEIKMPAVFPHDISANALPNLWASAGWFPMYAEESERNDKNFNNIRGGYAYAEIFGHWGLLRIDEINGEKVGAEIGMTVQAVNSLYPFHNHAVSEMYYNMRTPACANQFRTMAIREDSPLIRTVKEDSKVRRVQFDEGQHNSQTMWLSGSNAQDSLTYFHQNTIHAFDIDGQCEASPEERAIVSVWARSNAHDTRNDYGTTLLCESAKHPGTPAKRGEVIQCDLTKVKW</sequence>
<protein>
    <recommendedName>
        <fullName evidence="5">Dimethylsulfoniopropionate lyase DddY</fullName>
        <shortName evidence="4">DMSP lyase</shortName>
        <ecNumber evidence="1">4.4.1.3</ecNumber>
    </recommendedName>
</protein>
<comment type="function">
    <text evidence="1">Catalyzes the cleavage of dimethylsulfoniopropionate (DMSP) into dimethyl sulfide (DMS) and acrylate.</text>
</comment>
<comment type="catalytic activity">
    <reaction evidence="1">
        <text>S,S-dimethyl-beta-propiothetin = acrylate + dimethyl sulfide + H(+)</text>
        <dbReference type="Rhea" id="RHEA:19965"/>
        <dbReference type="ChEBI" id="CHEBI:15378"/>
        <dbReference type="ChEBI" id="CHEBI:16457"/>
        <dbReference type="ChEBI" id="CHEBI:17437"/>
        <dbReference type="ChEBI" id="CHEBI:37080"/>
        <dbReference type="EC" id="4.4.1.3"/>
    </reaction>
</comment>
<comment type="subcellular location">
    <subcellularLocation>
        <location evidence="6">Periplasm</location>
    </subcellularLocation>
</comment>
<comment type="induction">
    <text evidence="3">The maximal level of transcription is observed under anaerobic conditions in the presence of acrylate or methacrylate (PubMed:38831506). Anaerobiosis is necessary but not sufficient to increase the expression (PubMed:38831506).</text>
</comment>
<comment type="similarity">
    <text evidence="5">Belongs to the DMSP lyase DddY family.</text>
</comment>
<dbReference type="EC" id="4.4.1.3" evidence="1"/>
<dbReference type="EMBL" id="CP000961">
    <property type="protein sequence ID" value="ACA84578.1"/>
    <property type="molecule type" value="Genomic_DNA"/>
</dbReference>
<dbReference type="RefSeq" id="WP_012322927.1">
    <property type="nucleotide sequence ID" value="NC_010506.1"/>
</dbReference>
<dbReference type="SMR" id="B1KN81"/>
<dbReference type="KEGG" id="swd:Swoo_0277"/>
<dbReference type="eggNOG" id="ENOG5030K42">
    <property type="taxonomic scope" value="Bacteria"/>
</dbReference>
<dbReference type="HOGENOM" id="CLU_055116_0_0_6"/>
<dbReference type="Proteomes" id="UP000002168">
    <property type="component" value="Chromosome"/>
</dbReference>
<dbReference type="GO" id="GO:0042597">
    <property type="term" value="C:periplasmic space"/>
    <property type="evidence" value="ECO:0007669"/>
    <property type="project" value="UniProtKB-SubCell"/>
</dbReference>
<dbReference type="GO" id="GO:0016829">
    <property type="term" value="F:lyase activity"/>
    <property type="evidence" value="ECO:0007669"/>
    <property type="project" value="UniProtKB-KW"/>
</dbReference>
<dbReference type="CDD" id="cd20283">
    <property type="entry name" value="cupin_DddY"/>
    <property type="match status" value="1"/>
</dbReference>
<dbReference type="Gene3D" id="2.60.120.10">
    <property type="entry name" value="Jelly Rolls"/>
    <property type="match status" value="1"/>
</dbReference>
<dbReference type="InterPro" id="IPR014710">
    <property type="entry name" value="RmlC-like_jellyroll"/>
</dbReference>
<evidence type="ECO:0000250" key="1">
    <source>
        <dbReference type="UniProtKB" id="E7DDH2"/>
    </source>
</evidence>
<evidence type="ECO:0000255" key="2"/>
<evidence type="ECO:0000269" key="3">
    <source>
    </source>
</evidence>
<evidence type="ECO:0000303" key="4">
    <source>
    </source>
</evidence>
<evidence type="ECO:0000305" key="5"/>
<evidence type="ECO:0000305" key="6">
    <source>
    </source>
</evidence>
<evidence type="ECO:0000312" key="7">
    <source>
        <dbReference type="EMBL" id="ACA84578.1"/>
    </source>
</evidence>
<reference key="1">
    <citation type="submission" date="2008-02" db="EMBL/GenBank/DDBJ databases">
        <title>Complete sequence of Shewanella woodyi ATCC 51908.</title>
        <authorList>
            <consortium name="US DOE Joint Genome Institute"/>
            <person name="Copeland A."/>
            <person name="Lucas S."/>
            <person name="Lapidus A."/>
            <person name="Glavina del Rio T."/>
            <person name="Dalin E."/>
            <person name="Tice H."/>
            <person name="Bruce D."/>
            <person name="Goodwin L."/>
            <person name="Pitluck S."/>
            <person name="Sims D."/>
            <person name="Brettin T."/>
            <person name="Detter J.C."/>
            <person name="Han C."/>
            <person name="Kuske C.R."/>
            <person name="Schmutz J."/>
            <person name="Larimer F."/>
            <person name="Land M."/>
            <person name="Hauser L."/>
            <person name="Kyrpides N."/>
            <person name="Lykidis A."/>
            <person name="Zhao J.-S."/>
            <person name="Richardson P."/>
        </authorList>
    </citation>
    <scope>NUCLEOTIDE SEQUENCE [LARGE SCALE GENOMIC DNA]</scope>
    <source>
        <strain>ATCC 51908 / MS32</strain>
    </source>
</reference>
<reference key="2">
    <citation type="journal article" date="2024" name="Biochemistry (Mosc.)">
        <title>Acrylate Reductase of an Anaerobic Electron Transport Chain of the Marine Bacterium Shewanella woodyi.</title>
        <authorList>
            <person name="Bertsova Y.V."/>
            <person name="Serebryakova M.V."/>
            <person name="Bogachev V.A."/>
            <person name="Baykov A.A."/>
            <person name="Bogachev A.V."/>
        </authorList>
    </citation>
    <scope>INDUCTION</scope>
</reference>
<name>DDDY_SHEWM</name>
<feature type="signal peptide" evidence="2">
    <location>
        <begin position="1"/>
        <end position="18"/>
    </location>
</feature>
<feature type="chain" id="PRO_5002767517" description="Dimethylsulfoniopropionate lyase DddY">
    <location>
        <begin position="19"/>
        <end position="414"/>
    </location>
</feature>
<gene>
    <name evidence="4" type="primary">dddY</name>
    <name evidence="7" type="ordered locus">Swoo_0277</name>
</gene>
<proteinExistence type="evidence at transcript level"/>
<organism>
    <name type="scientific">Shewanella woodyi (strain ATCC 51908 / MS32)</name>
    <dbReference type="NCBI Taxonomy" id="392500"/>
    <lineage>
        <taxon>Bacteria</taxon>
        <taxon>Pseudomonadati</taxon>
        <taxon>Pseudomonadota</taxon>
        <taxon>Gammaproteobacteria</taxon>
        <taxon>Alteromonadales</taxon>
        <taxon>Shewanellaceae</taxon>
        <taxon>Shewanella</taxon>
    </lineage>
</organism>
<keyword id="KW-0456">Lyase</keyword>
<keyword id="KW-0574">Periplasm</keyword>
<keyword id="KW-1185">Reference proteome</keyword>
<keyword id="KW-0732">Signal</keyword>
<accession>B1KN81</accession>